<keyword id="KW-0066">ATP synthesis</keyword>
<keyword id="KW-0997">Cell inner membrane</keyword>
<keyword id="KW-1003">Cell membrane</keyword>
<keyword id="KW-0138">CF(0)</keyword>
<keyword id="KW-0375">Hydrogen ion transport</keyword>
<keyword id="KW-0406">Ion transport</keyword>
<keyword id="KW-0472">Membrane</keyword>
<keyword id="KW-0812">Transmembrane</keyword>
<keyword id="KW-1133">Transmembrane helix</keyword>
<keyword id="KW-0813">Transport</keyword>
<protein>
    <recommendedName>
        <fullName evidence="1">ATP synthase subunit b</fullName>
    </recommendedName>
    <alternativeName>
        <fullName evidence="1">ATP synthase F(0) sector subunit b</fullName>
    </alternativeName>
    <alternativeName>
        <fullName evidence="1">ATPase subunit I</fullName>
    </alternativeName>
    <alternativeName>
        <fullName evidence="1">F-type ATPase subunit b</fullName>
        <shortName evidence="1">F-ATPase subunit b</shortName>
    </alternativeName>
</protein>
<organism>
    <name type="scientific">Vibrio alginolyticus</name>
    <dbReference type="NCBI Taxonomy" id="663"/>
    <lineage>
        <taxon>Bacteria</taxon>
        <taxon>Pseudomonadati</taxon>
        <taxon>Pseudomonadota</taxon>
        <taxon>Gammaproteobacteria</taxon>
        <taxon>Vibrionales</taxon>
        <taxon>Vibrionaceae</taxon>
        <taxon>Vibrio</taxon>
    </lineage>
</organism>
<evidence type="ECO:0000255" key="1">
    <source>
        <dbReference type="HAMAP-Rule" id="MF_01398"/>
    </source>
</evidence>
<accession>P12989</accession>
<reference key="1">
    <citation type="journal article" date="1989" name="Nucleic Acids Res.">
        <title>Nucleotide sequence of the unc operon of Vibrio alginolyticus.</title>
        <authorList>
            <person name="Krumholz L.R."/>
            <person name="Esser U."/>
            <person name="Simoni R.D."/>
        </authorList>
    </citation>
    <scope>NUCLEOTIDE SEQUENCE [GENOMIC DNA]</scope>
    <source>
        <strain>138-2</strain>
    </source>
</reference>
<proteinExistence type="inferred from homology"/>
<sequence length="156" mass="17532">MNINATLLGQAISFALFVWFCMKYVWPPLMKAIEERQKKIADGLQAAERAAKDLDLAQANASDQLKEAKRTATEIIEQANKRKSQILDEAREEAQAERQKILAQAEAELEAERNRARDDLRKQVATLAVAGAEKILERSIDKDAQKDILDNITAKL</sequence>
<gene>
    <name evidence="1" type="primary">atpF</name>
    <name type="synonym">uncF</name>
</gene>
<name>ATPF_VIBAL</name>
<feature type="chain" id="PRO_0000082395" description="ATP synthase subunit b">
    <location>
        <begin position="1"/>
        <end position="156"/>
    </location>
</feature>
<feature type="transmembrane region" description="Helical" evidence="1">
    <location>
        <begin position="7"/>
        <end position="29"/>
    </location>
</feature>
<comment type="function">
    <text evidence="1">F(1)F(0) ATP synthase produces ATP from ADP in the presence of a proton or sodium gradient. F-type ATPases consist of two structural domains, F(1) containing the extramembraneous catalytic core and F(0) containing the membrane proton channel, linked together by a central stalk and a peripheral stalk. During catalysis, ATP synthesis in the catalytic domain of F(1) is coupled via a rotary mechanism of the central stalk subunits to proton translocation.</text>
</comment>
<comment type="function">
    <text evidence="1">Component of the F(0) channel, it forms part of the peripheral stalk, linking F(1) to F(0).</text>
</comment>
<comment type="subunit">
    <text evidence="1">F-type ATPases have 2 components, F(1) - the catalytic core - and F(0) - the membrane proton channel. F(1) has five subunits: alpha(3), beta(3), gamma(1), delta(1), epsilon(1). F(0) has three main subunits: a(1), b(2) and c(10-14). The alpha and beta chains form an alternating ring which encloses part of the gamma chain. F(1) is attached to F(0) by a central stalk formed by the gamma and epsilon chains, while a peripheral stalk is formed by the delta and b chains.</text>
</comment>
<comment type="subcellular location">
    <subcellularLocation>
        <location evidence="1">Cell inner membrane</location>
        <topology evidence="1">Single-pass membrane protein</topology>
    </subcellularLocation>
</comment>
<comment type="similarity">
    <text evidence="1">Belongs to the ATPase B chain family.</text>
</comment>
<dbReference type="EMBL" id="X16050">
    <property type="protein sequence ID" value="CAA34177.1"/>
    <property type="molecule type" value="Genomic_DNA"/>
</dbReference>
<dbReference type="PIR" id="S06078">
    <property type="entry name" value="S06078"/>
</dbReference>
<dbReference type="SMR" id="P12989"/>
<dbReference type="STRING" id="663.BAU10_15100"/>
<dbReference type="eggNOG" id="COG0711">
    <property type="taxonomic scope" value="Bacteria"/>
</dbReference>
<dbReference type="GO" id="GO:0005886">
    <property type="term" value="C:plasma membrane"/>
    <property type="evidence" value="ECO:0007669"/>
    <property type="project" value="UniProtKB-SubCell"/>
</dbReference>
<dbReference type="GO" id="GO:0045259">
    <property type="term" value="C:proton-transporting ATP synthase complex"/>
    <property type="evidence" value="ECO:0007669"/>
    <property type="project" value="UniProtKB-KW"/>
</dbReference>
<dbReference type="GO" id="GO:0046933">
    <property type="term" value="F:proton-transporting ATP synthase activity, rotational mechanism"/>
    <property type="evidence" value="ECO:0007669"/>
    <property type="project" value="UniProtKB-UniRule"/>
</dbReference>
<dbReference type="GO" id="GO:0046961">
    <property type="term" value="F:proton-transporting ATPase activity, rotational mechanism"/>
    <property type="evidence" value="ECO:0007669"/>
    <property type="project" value="TreeGrafter"/>
</dbReference>
<dbReference type="CDD" id="cd06503">
    <property type="entry name" value="ATP-synt_Fo_b"/>
    <property type="match status" value="1"/>
</dbReference>
<dbReference type="FunFam" id="1.20.5.620:FF:000001">
    <property type="entry name" value="ATP synthase subunit b"/>
    <property type="match status" value="1"/>
</dbReference>
<dbReference type="Gene3D" id="6.10.250.1580">
    <property type="match status" value="1"/>
</dbReference>
<dbReference type="HAMAP" id="MF_01398">
    <property type="entry name" value="ATP_synth_b_bprime"/>
    <property type="match status" value="1"/>
</dbReference>
<dbReference type="InterPro" id="IPR028987">
    <property type="entry name" value="ATP_synth_B-like_membr_sf"/>
</dbReference>
<dbReference type="InterPro" id="IPR002146">
    <property type="entry name" value="ATP_synth_b/b'su_bac/chlpt"/>
</dbReference>
<dbReference type="InterPro" id="IPR005864">
    <property type="entry name" value="ATP_synth_F0_bsu_bac"/>
</dbReference>
<dbReference type="InterPro" id="IPR050059">
    <property type="entry name" value="ATP_synthase_B_chain"/>
</dbReference>
<dbReference type="NCBIfam" id="TIGR01144">
    <property type="entry name" value="ATP_synt_b"/>
    <property type="match status" value="1"/>
</dbReference>
<dbReference type="NCBIfam" id="NF004411">
    <property type="entry name" value="PRK05759.1-2"/>
    <property type="match status" value="1"/>
</dbReference>
<dbReference type="NCBIfam" id="NF004413">
    <property type="entry name" value="PRK05759.1-4"/>
    <property type="match status" value="1"/>
</dbReference>
<dbReference type="PANTHER" id="PTHR33445:SF1">
    <property type="entry name" value="ATP SYNTHASE SUBUNIT B"/>
    <property type="match status" value="1"/>
</dbReference>
<dbReference type="PANTHER" id="PTHR33445">
    <property type="entry name" value="ATP SYNTHASE SUBUNIT B', CHLOROPLASTIC"/>
    <property type="match status" value="1"/>
</dbReference>
<dbReference type="Pfam" id="PF00430">
    <property type="entry name" value="ATP-synt_B"/>
    <property type="match status" value="1"/>
</dbReference>
<dbReference type="SUPFAM" id="SSF81573">
    <property type="entry name" value="F1F0 ATP synthase subunit B, membrane domain"/>
    <property type="match status" value="1"/>
</dbReference>